<protein>
    <recommendedName>
        <fullName>Probable coniferyl aldehyde dehydrogenase</fullName>
        <shortName>CALDH</shortName>
        <ecNumber>1.2.1.68</ecNumber>
    </recommendedName>
</protein>
<dbReference type="EC" id="1.2.1.68"/>
<dbReference type="EMBL" id="AE005673">
    <property type="protein sequence ID" value="AAK23824.1"/>
    <property type="molecule type" value="Genomic_DNA"/>
</dbReference>
<dbReference type="PIR" id="D87478">
    <property type="entry name" value="D87478"/>
</dbReference>
<dbReference type="RefSeq" id="NP_420656.1">
    <property type="nucleotide sequence ID" value="NC_002696.2"/>
</dbReference>
<dbReference type="RefSeq" id="WP_010919715.1">
    <property type="nucleotide sequence ID" value="NC_002696.2"/>
</dbReference>
<dbReference type="SMR" id="Q9A777"/>
<dbReference type="STRING" id="190650.CC_1849"/>
<dbReference type="EnsemblBacteria" id="AAK23824">
    <property type="protein sequence ID" value="AAK23824"/>
    <property type="gene ID" value="CC_1849"/>
</dbReference>
<dbReference type="KEGG" id="ccr:CC_1849"/>
<dbReference type="PATRIC" id="fig|190650.5.peg.1867"/>
<dbReference type="eggNOG" id="COG1012">
    <property type="taxonomic scope" value="Bacteria"/>
</dbReference>
<dbReference type="HOGENOM" id="CLU_005391_3_6_5"/>
<dbReference type="BioCyc" id="CAULO:CC1849-MONOMER"/>
<dbReference type="Proteomes" id="UP000001816">
    <property type="component" value="Chromosome"/>
</dbReference>
<dbReference type="GO" id="GO:0005737">
    <property type="term" value="C:cytoplasm"/>
    <property type="evidence" value="ECO:0007669"/>
    <property type="project" value="TreeGrafter"/>
</dbReference>
<dbReference type="GO" id="GO:0004029">
    <property type="term" value="F:aldehyde dehydrogenase (NAD+) activity"/>
    <property type="evidence" value="ECO:0007669"/>
    <property type="project" value="TreeGrafter"/>
</dbReference>
<dbReference type="GO" id="GO:0050269">
    <property type="term" value="F:coniferyl-aldehyde dehydrogenase [NAD(P)+] activity"/>
    <property type="evidence" value="ECO:0007669"/>
    <property type="project" value="UniProtKB-EC"/>
</dbReference>
<dbReference type="GO" id="GO:0006081">
    <property type="term" value="P:aldehyde metabolic process"/>
    <property type="evidence" value="ECO:0007669"/>
    <property type="project" value="InterPro"/>
</dbReference>
<dbReference type="CDD" id="cd07133">
    <property type="entry name" value="ALDH_CALDH_CalB"/>
    <property type="match status" value="1"/>
</dbReference>
<dbReference type="FunFam" id="3.40.309.10:FF:000003">
    <property type="entry name" value="Aldehyde dehydrogenase"/>
    <property type="match status" value="1"/>
</dbReference>
<dbReference type="Gene3D" id="3.40.605.10">
    <property type="entry name" value="Aldehyde Dehydrogenase, Chain A, domain 1"/>
    <property type="match status" value="1"/>
</dbReference>
<dbReference type="Gene3D" id="3.40.309.10">
    <property type="entry name" value="Aldehyde Dehydrogenase, Chain A, domain 2"/>
    <property type="match status" value="1"/>
</dbReference>
<dbReference type="InterPro" id="IPR016161">
    <property type="entry name" value="Ald_DH/histidinol_DH"/>
</dbReference>
<dbReference type="InterPro" id="IPR016163">
    <property type="entry name" value="Ald_DH_C"/>
</dbReference>
<dbReference type="InterPro" id="IPR029510">
    <property type="entry name" value="Ald_DH_CS_GLU"/>
</dbReference>
<dbReference type="InterPro" id="IPR016162">
    <property type="entry name" value="Ald_DH_N"/>
</dbReference>
<dbReference type="InterPro" id="IPR015590">
    <property type="entry name" value="Aldehyde_DH_dom"/>
</dbReference>
<dbReference type="InterPro" id="IPR012394">
    <property type="entry name" value="Aldehyde_DH_NAD(P)"/>
</dbReference>
<dbReference type="PANTHER" id="PTHR43570">
    <property type="entry name" value="ALDEHYDE DEHYDROGENASE"/>
    <property type="match status" value="1"/>
</dbReference>
<dbReference type="PANTHER" id="PTHR43570:SF20">
    <property type="entry name" value="ALDEHYDE DEHYDROGENASE ALDX-RELATED"/>
    <property type="match status" value="1"/>
</dbReference>
<dbReference type="Pfam" id="PF00171">
    <property type="entry name" value="Aldedh"/>
    <property type="match status" value="1"/>
</dbReference>
<dbReference type="PIRSF" id="PIRSF036492">
    <property type="entry name" value="ALDH"/>
    <property type="match status" value="1"/>
</dbReference>
<dbReference type="SUPFAM" id="SSF53720">
    <property type="entry name" value="ALDH-like"/>
    <property type="match status" value="1"/>
</dbReference>
<dbReference type="PROSITE" id="PS00687">
    <property type="entry name" value="ALDEHYDE_DEHYDR_GLU"/>
    <property type="match status" value="1"/>
</dbReference>
<name>CALB_CAUVC</name>
<evidence type="ECO:0000255" key="1">
    <source>
        <dbReference type="PROSITE-ProRule" id="PRU10007"/>
    </source>
</evidence>
<evidence type="ECO:0000305" key="2"/>
<organism>
    <name type="scientific">Caulobacter vibrioides (strain ATCC 19089 / CIP 103742 / CB 15)</name>
    <name type="common">Caulobacter crescentus</name>
    <dbReference type="NCBI Taxonomy" id="190650"/>
    <lineage>
        <taxon>Bacteria</taxon>
        <taxon>Pseudomonadati</taxon>
        <taxon>Pseudomonadota</taxon>
        <taxon>Alphaproteobacteria</taxon>
        <taxon>Caulobacterales</taxon>
        <taxon>Caulobacteraceae</taxon>
        <taxon>Caulobacter</taxon>
    </lineage>
</organism>
<proteinExistence type="inferred from homology"/>
<reference key="1">
    <citation type="journal article" date="2001" name="Proc. Natl. Acad. Sci. U.S.A.">
        <title>Complete genome sequence of Caulobacter crescentus.</title>
        <authorList>
            <person name="Nierman W.C."/>
            <person name="Feldblyum T.V."/>
            <person name="Laub M.T."/>
            <person name="Paulsen I.T."/>
            <person name="Nelson K.E."/>
            <person name="Eisen J.A."/>
            <person name="Heidelberg J.F."/>
            <person name="Alley M.R.K."/>
            <person name="Ohta N."/>
            <person name="Maddock J.R."/>
            <person name="Potocka I."/>
            <person name="Nelson W.C."/>
            <person name="Newton A."/>
            <person name="Stephens C."/>
            <person name="Phadke N.D."/>
            <person name="Ely B."/>
            <person name="DeBoy R.T."/>
            <person name="Dodson R.J."/>
            <person name="Durkin A.S."/>
            <person name="Gwinn M.L."/>
            <person name="Haft D.H."/>
            <person name="Kolonay J.F."/>
            <person name="Smit J."/>
            <person name="Craven M.B."/>
            <person name="Khouri H.M."/>
            <person name="Shetty J."/>
            <person name="Berry K.J."/>
            <person name="Utterback T.R."/>
            <person name="Tran K."/>
            <person name="Wolf A.M."/>
            <person name="Vamathevan J.J."/>
            <person name="Ermolaeva M.D."/>
            <person name="White O."/>
            <person name="Salzberg S.L."/>
            <person name="Venter J.C."/>
            <person name="Shapiro L."/>
            <person name="Fraser C.M."/>
        </authorList>
    </citation>
    <scope>NUCLEOTIDE SEQUENCE [LARGE SCALE GENOMIC DNA]</scope>
    <source>
        <strain>ATCC 19089 / CIP 103742 / CB 15</strain>
    </source>
</reference>
<comment type="catalytic activity">
    <reaction>
        <text>(E)-coniferaldehyde + NADP(+) + H2O = (E)-ferulate + NADPH + 2 H(+)</text>
        <dbReference type="Rhea" id="RHEA:23964"/>
        <dbReference type="ChEBI" id="CHEBI:15377"/>
        <dbReference type="ChEBI" id="CHEBI:15378"/>
        <dbReference type="ChEBI" id="CHEBI:16547"/>
        <dbReference type="ChEBI" id="CHEBI:29749"/>
        <dbReference type="ChEBI" id="CHEBI:57783"/>
        <dbReference type="ChEBI" id="CHEBI:58349"/>
        <dbReference type="EC" id="1.2.1.68"/>
    </reaction>
</comment>
<comment type="catalytic activity">
    <reaction>
        <text>(E)-coniferaldehyde + NAD(+) + H2O = (E)-ferulate + NADH + 2 H(+)</text>
        <dbReference type="Rhea" id="RHEA:23968"/>
        <dbReference type="ChEBI" id="CHEBI:15377"/>
        <dbReference type="ChEBI" id="CHEBI:15378"/>
        <dbReference type="ChEBI" id="CHEBI:16547"/>
        <dbReference type="ChEBI" id="CHEBI:29749"/>
        <dbReference type="ChEBI" id="CHEBI:57540"/>
        <dbReference type="ChEBI" id="CHEBI:57945"/>
        <dbReference type="EC" id="1.2.1.68"/>
    </reaction>
</comment>
<comment type="similarity">
    <text evidence="2">Belongs to the aldehyde dehydrogenase family.</text>
</comment>
<feature type="chain" id="PRO_0000056586" description="Probable coniferyl aldehyde dehydrogenase">
    <location>
        <begin position="1"/>
        <end position="485"/>
    </location>
</feature>
<feature type="active site" evidence="1">
    <location>
        <position position="226"/>
    </location>
</feature>
<feature type="active site" evidence="1">
    <location>
        <position position="260"/>
    </location>
</feature>
<keyword id="KW-0520">NAD</keyword>
<keyword id="KW-0560">Oxidoreductase</keyword>
<keyword id="KW-1185">Reference proteome</keyword>
<sequence length="485" mass="52721">MNAPVNLSSDAHKAVMNDVLQRQKAAHLRDGPPSAEKRIQWLNRCIDLLVGHQAEIAKAVNQDFGSRSPEATSLTDVAGSIGPLKHAREHLTKWMKPEKHKTTPAILGLFGAKATVQWQPKGVVGVISPWNFPVNLTFAPLAGVFAAGNRAMIKPSEFTPATSDLLKAMFAKAFNEEEVAVFVGGPEVGQAFSGLAFDHLVFTGATSVAKHVMRAAAENLVPVTLELGGKSPVILSRGADMATAAARVMNGKTLNAGQICLAPDYVLAPQEDVEAFVKEAQAAVSRYFPTIKDNPDYTAVVAQRHYDRVKGYVDDARAKGARVIEINPAGEDLSQQEHRKIPPTLILDPTDDMKVMQEEIFGPVLPVKGYKTVDEAVDYVNAHDRPLALYWFGTDEAEKDRVLERTTSGGVTVNDVIFHVAQENLPFGGIGPAGMGAYHGYDGFREFSHRKAVFQQLKKDIAPMLGLRPPYGEGIRKYLAGQIKK</sequence>
<gene>
    <name type="primary">calB</name>
    <name type="ordered locus">CC_1849</name>
</gene>
<accession>Q9A777</accession>